<evidence type="ECO:0000250" key="1">
    <source>
        <dbReference type="UniProtKB" id="Q8LQ68"/>
    </source>
</evidence>
<evidence type="ECO:0000255" key="2">
    <source>
        <dbReference type="PROSITE-ProRule" id="PRU01084"/>
    </source>
</evidence>
<evidence type="ECO:0000269" key="3">
    <source>
    </source>
</evidence>
<evidence type="ECO:0000305" key="4"/>
<evidence type="ECO:0000305" key="5">
    <source>
    </source>
</evidence>
<reference key="1">
    <citation type="journal article" date="2006" name="Planta">
        <title>Structure, expression, and functional analysis of the hexokinase gene family in rice (Oryza sativa L.).</title>
        <authorList>
            <person name="Cho J.-I."/>
            <person name="Ryoo N."/>
            <person name="Ko S."/>
            <person name="Lee S.-K."/>
            <person name="Lee J."/>
            <person name="Jung K.-H."/>
            <person name="Lee Y.-H."/>
            <person name="Bhoo S.H."/>
            <person name="Winderickx J."/>
            <person name="An G."/>
            <person name="Hahn T.-R."/>
            <person name="Jeon J.-S."/>
        </authorList>
    </citation>
    <scope>NUCLEOTIDE SEQUENCE [MRNA]</scope>
    <scope>FUNCTION</scope>
    <scope>TISSUE SPECIFICITY</scope>
    <scope>DEVELOPMENTAL STAGE</scope>
    <scope>INDUCTION</scope>
    <scope>NOMENCLATURE</scope>
    <source>
        <strain>cv. Jinmi</strain>
    </source>
</reference>
<reference key="2">
    <citation type="submission" date="2005-01" db="EMBL/GenBank/DDBJ databases">
        <title>The hexokinase gene family in rice.</title>
        <authorList>
            <person name="Wang Y.D."/>
            <person name="Cheng W."/>
            <person name="Wang X.S."/>
            <person name="Zhou X.J."/>
        </authorList>
    </citation>
    <scope>NUCLEOTIDE SEQUENCE [MRNA]</scope>
    <source>
        <strain>cv. Zhonghua 15</strain>
        <tissue>Flower</tissue>
    </source>
</reference>
<reference key="3">
    <citation type="journal article" date="2005" name="Mol. Genet. Genomics">
        <title>A fine physical map of the rice chromosome 5.</title>
        <authorList>
            <person name="Cheng C.-H."/>
            <person name="Chung M.C."/>
            <person name="Liu S.-M."/>
            <person name="Chen S.-K."/>
            <person name="Kao F.Y."/>
            <person name="Lin S.-J."/>
            <person name="Hsiao S.-H."/>
            <person name="Tseng I.C."/>
            <person name="Hsing Y.-I.C."/>
            <person name="Wu H.-P."/>
            <person name="Chen C.-S."/>
            <person name="Shaw J.-F."/>
            <person name="Wu J."/>
            <person name="Matsumoto T."/>
            <person name="Sasaki T."/>
            <person name="Chen H.-C."/>
            <person name="Chow T.-Y."/>
        </authorList>
    </citation>
    <scope>NUCLEOTIDE SEQUENCE [LARGE SCALE GENOMIC DNA]</scope>
    <source>
        <strain>cv. Nipponbare</strain>
    </source>
</reference>
<reference key="4">
    <citation type="journal article" date="2005" name="Nature">
        <title>The map-based sequence of the rice genome.</title>
        <authorList>
            <consortium name="International rice genome sequencing project (IRGSP)"/>
        </authorList>
    </citation>
    <scope>NUCLEOTIDE SEQUENCE [LARGE SCALE GENOMIC DNA]</scope>
    <source>
        <strain>cv. Nipponbare</strain>
    </source>
</reference>
<reference key="5">
    <citation type="journal article" date="2013" name="Rice">
        <title>Improvement of the Oryza sativa Nipponbare reference genome using next generation sequence and optical map data.</title>
        <authorList>
            <person name="Kawahara Y."/>
            <person name="de la Bastide M."/>
            <person name="Hamilton J.P."/>
            <person name="Kanamori H."/>
            <person name="McCombie W.R."/>
            <person name="Ouyang S."/>
            <person name="Schwartz D.C."/>
            <person name="Tanaka T."/>
            <person name="Wu J."/>
            <person name="Zhou S."/>
            <person name="Childs K.L."/>
            <person name="Davidson R.M."/>
            <person name="Lin H."/>
            <person name="Quesada-Ocampo L."/>
            <person name="Vaillancourt B."/>
            <person name="Sakai H."/>
            <person name="Lee S.S."/>
            <person name="Kim J."/>
            <person name="Numa H."/>
            <person name="Itoh T."/>
            <person name="Buell C.R."/>
            <person name="Matsumoto T."/>
        </authorList>
    </citation>
    <scope>GENOME REANNOTATION</scope>
    <source>
        <strain>cv. Nipponbare</strain>
    </source>
</reference>
<dbReference type="EC" id="2.7.1.1" evidence="5"/>
<dbReference type="EMBL" id="DQ116384">
    <property type="protein sequence ID" value="AAZ93619.1"/>
    <property type="molecule type" value="mRNA"/>
</dbReference>
<dbReference type="EMBL" id="AY884166">
    <property type="protein sequence ID" value="AAX68419.1"/>
    <property type="molecule type" value="mRNA"/>
</dbReference>
<dbReference type="EMBL" id="AC121365">
    <property type="protein sequence ID" value="AAT47078.1"/>
    <property type="status" value="ALT_SEQ"/>
    <property type="molecule type" value="Genomic_DNA"/>
</dbReference>
<dbReference type="EMBL" id="AP014961">
    <property type="status" value="NOT_ANNOTATED_CDS"/>
    <property type="molecule type" value="Genomic_DNA"/>
</dbReference>
<dbReference type="RefSeq" id="XP_015637797.1">
    <property type="nucleotide sequence ID" value="XM_015782311.1"/>
</dbReference>
<dbReference type="SMR" id="Q2KNB9"/>
<dbReference type="FunCoup" id="Q2KNB9">
    <property type="interactions" value="1967"/>
</dbReference>
<dbReference type="STRING" id="39947.Q2KNB9"/>
<dbReference type="PaxDb" id="39947-Q2KNB9"/>
<dbReference type="EnsemblPlants" id="Os05t0532600-01">
    <property type="protein sequence ID" value="Os05t0532600-01"/>
    <property type="gene ID" value="Os05g0532600"/>
</dbReference>
<dbReference type="Gramene" id="Os05t0532600-01">
    <property type="protein sequence ID" value="Os05t0532600-01"/>
    <property type="gene ID" value="Os05g0532600"/>
</dbReference>
<dbReference type="eggNOG" id="KOG1369">
    <property type="taxonomic scope" value="Eukaryota"/>
</dbReference>
<dbReference type="InParanoid" id="Q2KNB9"/>
<dbReference type="OrthoDB" id="419537at2759"/>
<dbReference type="BRENDA" id="2.7.1.1">
    <property type="organism ID" value="4460"/>
</dbReference>
<dbReference type="UniPathway" id="UPA00109">
    <property type="reaction ID" value="UER00180"/>
</dbReference>
<dbReference type="UniPathway" id="UPA00242"/>
<dbReference type="Proteomes" id="UP000000763">
    <property type="component" value="Chromosome 5"/>
</dbReference>
<dbReference type="Proteomes" id="UP000059680">
    <property type="component" value="Chromosome 5"/>
</dbReference>
<dbReference type="GO" id="GO:0005829">
    <property type="term" value="C:cytosol"/>
    <property type="evidence" value="ECO:0000318"/>
    <property type="project" value="GO_Central"/>
</dbReference>
<dbReference type="GO" id="GO:0005739">
    <property type="term" value="C:mitochondrion"/>
    <property type="evidence" value="ECO:0000318"/>
    <property type="project" value="GO_Central"/>
</dbReference>
<dbReference type="GO" id="GO:0005524">
    <property type="term" value="F:ATP binding"/>
    <property type="evidence" value="ECO:0007669"/>
    <property type="project" value="UniProtKB-KW"/>
</dbReference>
<dbReference type="GO" id="GO:0005536">
    <property type="term" value="F:D-glucose binding"/>
    <property type="evidence" value="ECO:0007669"/>
    <property type="project" value="InterPro"/>
</dbReference>
<dbReference type="GO" id="GO:0008865">
    <property type="term" value="F:fructokinase activity"/>
    <property type="evidence" value="ECO:0000318"/>
    <property type="project" value="GO_Central"/>
</dbReference>
<dbReference type="GO" id="GO:0004340">
    <property type="term" value="F:glucokinase activity"/>
    <property type="evidence" value="ECO:0000318"/>
    <property type="project" value="GO_Central"/>
</dbReference>
<dbReference type="GO" id="GO:0051156">
    <property type="term" value="P:glucose 6-phosphate metabolic process"/>
    <property type="evidence" value="ECO:0000318"/>
    <property type="project" value="GO_Central"/>
</dbReference>
<dbReference type="GO" id="GO:0006006">
    <property type="term" value="P:glucose metabolic process"/>
    <property type="evidence" value="ECO:0000318"/>
    <property type="project" value="GO_Central"/>
</dbReference>
<dbReference type="GO" id="GO:0006096">
    <property type="term" value="P:glycolytic process"/>
    <property type="evidence" value="ECO:0000318"/>
    <property type="project" value="GO_Central"/>
</dbReference>
<dbReference type="GO" id="GO:0001678">
    <property type="term" value="P:intracellular glucose homeostasis"/>
    <property type="evidence" value="ECO:0000318"/>
    <property type="project" value="GO_Central"/>
</dbReference>
<dbReference type="CDD" id="cd24020">
    <property type="entry name" value="ASKHA_NBD_HK_plant"/>
    <property type="match status" value="1"/>
</dbReference>
<dbReference type="FunFam" id="3.30.420.40:FF:000034">
    <property type="entry name" value="Phosphotransferase"/>
    <property type="match status" value="1"/>
</dbReference>
<dbReference type="FunFam" id="3.40.367.20:FF:000003">
    <property type="entry name" value="Phosphotransferase"/>
    <property type="match status" value="1"/>
</dbReference>
<dbReference type="Gene3D" id="3.30.420.40">
    <property type="match status" value="1"/>
</dbReference>
<dbReference type="Gene3D" id="3.40.367.20">
    <property type="match status" value="1"/>
</dbReference>
<dbReference type="InterPro" id="IPR043129">
    <property type="entry name" value="ATPase_NBD"/>
</dbReference>
<dbReference type="InterPro" id="IPR001312">
    <property type="entry name" value="Hexokinase"/>
</dbReference>
<dbReference type="InterPro" id="IPR022673">
    <property type="entry name" value="Hexokinase_C"/>
</dbReference>
<dbReference type="InterPro" id="IPR022672">
    <property type="entry name" value="Hexokinase_N"/>
</dbReference>
<dbReference type="PANTHER" id="PTHR19443">
    <property type="entry name" value="HEXOKINASE"/>
    <property type="match status" value="1"/>
</dbReference>
<dbReference type="PANTHER" id="PTHR19443:SF16">
    <property type="entry name" value="HEXOKINASE TYPE 1-RELATED"/>
    <property type="match status" value="1"/>
</dbReference>
<dbReference type="Pfam" id="PF00349">
    <property type="entry name" value="Hexokinase_1"/>
    <property type="match status" value="1"/>
</dbReference>
<dbReference type="Pfam" id="PF03727">
    <property type="entry name" value="Hexokinase_2"/>
    <property type="match status" value="1"/>
</dbReference>
<dbReference type="PRINTS" id="PR00475">
    <property type="entry name" value="HEXOKINASE"/>
</dbReference>
<dbReference type="SUPFAM" id="SSF53067">
    <property type="entry name" value="Actin-like ATPase domain"/>
    <property type="match status" value="2"/>
</dbReference>
<dbReference type="PROSITE" id="PS51748">
    <property type="entry name" value="HEXOKINASE_2"/>
    <property type="match status" value="1"/>
</dbReference>
<gene>
    <name type="primary">HXK2</name>
    <name type="synonym">HXK3</name>
    <name type="ordered locus">Os05g0532600</name>
    <name type="ordered locus">LOC_Os05g45590</name>
    <name type="ORF">OSJNBa0053E05.8</name>
</gene>
<sequence length="494" mass="53626">MRKAAAAAVAAAAAVGVALLVRRQLREAKRWGRADAVLRELEERCAAPPGRLRQVADAMAVEMHAGLASEGGSKLKMIISYVDALPSGEEKGVFYALDLGGTNFRVLRVQLGGKEGRVIKQEHDEISIPPHLMTGGSNELFDFIASSLAKFVASEGEDFHLAEGRQRELGFTFSFPVKQTSIASGTLINWTKGFSIDETVGEDVVTELTKALERQGLDMKVTALINDTIGTLAGGRYDDNDVIAAVILGTGTNAAYVERANAIPKWHDLLPKSGDMVINMEWGNFRSSHLPLTEFDQALDAESLNPGEQVYEKLISGMYLGEIVRRVLLKMAEEASLFGDEVPPKLKIPFIIRTPYMSMMHCDRSPDLRTVGAKLKDILGVQNTSLKTRRLVVDVCDIVAKRAAHLAAAGIHGILKKLGRDVPNTDKQRTVIAVDGGLYEHYTIFAECVESTLRDMLGEDVSSTIVIKLAKDGSGIGAALLAAAHSQYREAEEL</sequence>
<organism>
    <name type="scientific">Oryza sativa subsp. japonica</name>
    <name type="common">Rice</name>
    <dbReference type="NCBI Taxonomy" id="39947"/>
    <lineage>
        <taxon>Eukaryota</taxon>
        <taxon>Viridiplantae</taxon>
        <taxon>Streptophyta</taxon>
        <taxon>Embryophyta</taxon>
        <taxon>Tracheophyta</taxon>
        <taxon>Spermatophyta</taxon>
        <taxon>Magnoliopsida</taxon>
        <taxon>Liliopsida</taxon>
        <taxon>Poales</taxon>
        <taxon>Poaceae</taxon>
        <taxon>BOP clade</taxon>
        <taxon>Oryzoideae</taxon>
        <taxon>Oryzeae</taxon>
        <taxon>Oryzinae</taxon>
        <taxon>Oryza</taxon>
        <taxon>Oryza sativa</taxon>
    </lineage>
</organism>
<comment type="function">
    <text evidence="3">Fructose and glucose phosphorylating enzyme.</text>
</comment>
<comment type="catalytic activity">
    <reaction evidence="5">
        <text>a D-hexose + ATP = a D-hexose 6-phosphate + ADP + H(+)</text>
        <dbReference type="Rhea" id="RHEA:22740"/>
        <dbReference type="ChEBI" id="CHEBI:4194"/>
        <dbReference type="ChEBI" id="CHEBI:15378"/>
        <dbReference type="ChEBI" id="CHEBI:30616"/>
        <dbReference type="ChEBI" id="CHEBI:229467"/>
        <dbReference type="ChEBI" id="CHEBI:456216"/>
        <dbReference type="EC" id="2.7.1.1"/>
    </reaction>
    <physiologicalReaction direction="left-to-right" evidence="5">
        <dbReference type="Rhea" id="RHEA:22741"/>
    </physiologicalReaction>
</comment>
<comment type="catalytic activity">
    <reaction evidence="5">
        <text>D-fructose + ATP = D-fructose 6-phosphate + ADP + H(+)</text>
        <dbReference type="Rhea" id="RHEA:16125"/>
        <dbReference type="ChEBI" id="CHEBI:15378"/>
        <dbReference type="ChEBI" id="CHEBI:30616"/>
        <dbReference type="ChEBI" id="CHEBI:37721"/>
        <dbReference type="ChEBI" id="CHEBI:61527"/>
        <dbReference type="ChEBI" id="CHEBI:456216"/>
        <dbReference type="EC" id="2.7.1.1"/>
    </reaction>
    <physiologicalReaction direction="left-to-right" evidence="5">
        <dbReference type="Rhea" id="RHEA:16126"/>
    </physiologicalReaction>
</comment>
<comment type="catalytic activity">
    <reaction evidence="5">
        <text>D-glucose + ATP = D-glucose 6-phosphate + ADP + H(+)</text>
        <dbReference type="Rhea" id="RHEA:17825"/>
        <dbReference type="ChEBI" id="CHEBI:4167"/>
        <dbReference type="ChEBI" id="CHEBI:15378"/>
        <dbReference type="ChEBI" id="CHEBI:30616"/>
        <dbReference type="ChEBI" id="CHEBI:61548"/>
        <dbReference type="ChEBI" id="CHEBI:456216"/>
        <dbReference type="EC" id="2.7.1.1"/>
    </reaction>
    <physiologicalReaction direction="left-to-right" evidence="5">
        <dbReference type="Rhea" id="RHEA:17826"/>
    </physiologicalReaction>
</comment>
<comment type="pathway">
    <text evidence="5">Carbohydrate metabolism; hexose metabolism.</text>
</comment>
<comment type="pathway">
    <text evidence="5">Carbohydrate degradation; glycolysis; D-glyceraldehyde 3-phosphate and glycerone phosphate from D-glucose: step 1/4.</text>
</comment>
<comment type="tissue specificity">
    <text evidence="3">Expressed in roots, leaves, flowers, immature seeds, endosperm and seed coat.</text>
</comment>
<comment type="developmental stage">
    <text evidence="3">Expressed during flower development until 15 days after flowering.</text>
</comment>
<comment type="induction">
    <text evidence="3">By glucose or fructose treatment in leaves.</text>
</comment>
<comment type="similarity">
    <text evidence="2 4">Belongs to the hexokinase family.</text>
</comment>
<comment type="sequence caution" evidence="4">
    <conflict type="erroneous gene model prediction">
        <sequence resource="EMBL-CDS" id="AAT47078"/>
    </conflict>
</comment>
<protein>
    <recommendedName>
        <fullName>Hexokinase-2</fullName>
        <ecNumber evidence="5">2.7.1.1</ecNumber>
    </recommendedName>
    <alternativeName>
        <fullName>Hexokinase-3</fullName>
    </alternativeName>
</protein>
<feature type="chain" id="PRO_0000247565" description="Hexokinase-2">
    <location>
        <begin position="1"/>
        <end position="494"/>
    </location>
</feature>
<feature type="domain" description="Hexokinase" evidence="2">
    <location>
        <begin position="32"/>
        <end position="483"/>
    </location>
</feature>
<feature type="region of interest" description="Hexokinase small subdomain" evidence="2">
    <location>
        <begin position="87"/>
        <end position="225"/>
    </location>
</feature>
<feature type="region of interest" description="Hexokinase large subdomain" evidence="2">
    <location>
        <begin position="226"/>
        <end position="472"/>
    </location>
</feature>
<feature type="binding site" evidence="1">
    <location>
        <position position="101"/>
    </location>
    <ligand>
        <name>ADP</name>
        <dbReference type="ChEBI" id="CHEBI:456216"/>
    </ligand>
</feature>
<feature type="binding site" evidence="1">
    <location>
        <position position="102"/>
    </location>
    <ligand>
        <name>ADP</name>
        <dbReference type="ChEBI" id="CHEBI:456216"/>
    </ligand>
</feature>
<feature type="binding site" evidence="1">
    <location>
        <position position="103"/>
    </location>
    <ligand>
        <name>ADP</name>
        <dbReference type="ChEBI" id="CHEBI:456216"/>
    </ligand>
</feature>
<feature type="binding site" evidence="1">
    <location>
        <position position="191"/>
    </location>
    <ligand>
        <name>D-glucose</name>
        <dbReference type="ChEBI" id="CHEBI:4167"/>
    </ligand>
</feature>
<feature type="binding site" evidence="1">
    <location>
        <position position="192"/>
    </location>
    <ligand>
        <name>D-glucose</name>
        <dbReference type="ChEBI" id="CHEBI:4167"/>
    </ligand>
</feature>
<feature type="binding site" evidence="1">
    <location>
        <position position="226"/>
    </location>
    <ligand>
        <name>D-glucose</name>
        <dbReference type="ChEBI" id="CHEBI:4167"/>
    </ligand>
</feature>
<feature type="binding site" evidence="1">
    <location>
        <position position="227"/>
    </location>
    <ligand>
        <name>D-glucose</name>
        <dbReference type="ChEBI" id="CHEBI:4167"/>
    </ligand>
</feature>
<feature type="binding site" evidence="1">
    <location>
        <position position="250"/>
    </location>
    <ligand>
        <name>ADP</name>
        <dbReference type="ChEBI" id="CHEBI:456216"/>
    </ligand>
</feature>
<feature type="binding site" evidence="1">
    <location>
        <position position="253"/>
    </location>
    <ligand>
        <name>D-glucose</name>
        <dbReference type="ChEBI" id="CHEBI:4167"/>
    </ligand>
</feature>
<feature type="binding site" evidence="1">
    <location>
        <position position="281"/>
    </location>
    <ligand>
        <name>D-glucose</name>
        <dbReference type="ChEBI" id="CHEBI:4167"/>
    </ligand>
</feature>
<feature type="binding site" evidence="1">
    <location>
        <position position="312"/>
    </location>
    <ligand>
        <name>D-glucose</name>
        <dbReference type="ChEBI" id="CHEBI:4167"/>
    </ligand>
</feature>
<feature type="binding site" evidence="1">
    <location>
        <position position="437"/>
    </location>
    <ligand>
        <name>ADP</name>
        <dbReference type="ChEBI" id="CHEBI:456216"/>
    </ligand>
</feature>
<name>HXK2_ORYSJ</name>
<accession>Q2KNB9</accession>
<accession>Q6I5H8</accession>
<proteinExistence type="evidence at transcript level"/>
<keyword id="KW-0067">ATP-binding</keyword>
<keyword id="KW-0324">Glycolysis</keyword>
<keyword id="KW-0418">Kinase</keyword>
<keyword id="KW-0547">Nucleotide-binding</keyword>
<keyword id="KW-1185">Reference proteome</keyword>
<keyword id="KW-0808">Transferase</keyword>